<protein>
    <recommendedName>
        <fullName evidence="1">Protein AaeX</fullName>
    </recommendedName>
</protein>
<sequence>MSLLPVMVIFGLSFPPIFLELLISLALFFVVRRILQPTGIYEFVWHPALFNTALYCCLFYLTSRLFS</sequence>
<evidence type="ECO:0000255" key="1">
    <source>
        <dbReference type="HAMAP-Rule" id="MF_01546"/>
    </source>
</evidence>
<keyword id="KW-1003">Cell membrane</keyword>
<keyword id="KW-0472">Membrane</keyword>
<keyword id="KW-0812">Transmembrane</keyword>
<keyword id="KW-1133">Transmembrane helix</keyword>
<organism>
    <name type="scientific">Yersinia pestis bv. Antiqua (strain Angola)</name>
    <dbReference type="NCBI Taxonomy" id="349746"/>
    <lineage>
        <taxon>Bacteria</taxon>
        <taxon>Pseudomonadati</taxon>
        <taxon>Pseudomonadota</taxon>
        <taxon>Gammaproteobacteria</taxon>
        <taxon>Enterobacterales</taxon>
        <taxon>Yersiniaceae</taxon>
        <taxon>Yersinia</taxon>
    </lineage>
</organism>
<reference key="1">
    <citation type="journal article" date="2010" name="J. Bacteriol.">
        <title>Genome sequence of the deep-rooted Yersinia pestis strain Angola reveals new insights into the evolution and pangenome of the plague bacterium.</title>
        <authorList>
            <person name="Eppinger M."/>
            <person name="Worsham P.L."/>
            <person name="Nikolich M.P."/>
            <person name="Riley D.R."/>
            <person name="Sebastian Y."/>
            <person name="Mou S."/>
            <person name="Achtman M."/>
            <person name="Lindler L.E."/>
            <person name="Ravel J."/>
        </authorList>
    </citation>
    <scope>NUCLEOTIDE SEQUENCE [LARGE SCALE GENOMIC DNA]</scope>
    <source>
        <strain>Angola</strain>
    </source>
</reference>
<accession>A9R1W0</accession>
<name>AAEX_YERPG</name>
<comment type="subcellular location">
    <subcellularLocation>
        <location evidence="1">Cell membrane</location>
        <topology evidence="1">Multi-pass membrane protein</topology>
    </subcellularLocation>
</comment>
<comment type="similarity">
    <text evidence="1">Belongs to the AaeX family.</text>
</comment>
<gene>
    <name evidence="1" type="primary">aaeX</name>
    <name type="ordered locus">YpAngola_A1177</name>
</gene>
<feature type="chain" id="PRO_1000146768" description="Protein AaeX">
    <location>
        <begin position="1"/>
        <end position="67"/>
    </location>
</feature>
<feature type="transmembrane region" description="Helical" evidence="1">
    <location>
        <begin position="3"/>
        <end position="23"/>
    </location>
</feature>
<feature type="transmembrane region" description="Helical" evidence="1">
    <location>
        <begin position="39"/>
        <end position="59"/>
    </location>
</feature>
<proteinExistence type="inferred from homology"/>
<dbReference type="EMBL" id="CP000901">
    <property type="protein sequence ID" value="ABX86362.1"/>
    <property type="molecule type" value="Genomic_DNA"/>
</dbReference>
<dbReference type="RefSeq" id="WP_002210093.1">
    <property type="nucleotide sequence ID" value="NZ_CP009935.1"/>
</dbReference>
<dbReference type="GeneID" id="57975109"/>
<dbReference type="KEGG" id="ypg:YpAngola_A1177"/>
<dbReference type="PATRIC" id="fig|349746.12.peg.2129"/>
<dbReference type="GO" id="GO:0005886">
    <property type="term" value="C:plasma membrane"/>
    <property type="evidence" value="ECO:0007669"/>
    <property type="project" value="UniProtKB-SubCell"/>
</dbReference>
<dbReference type="HAMAP" id="MF_01546">
    <property type="entry name" value="AaeX"/>
    <property type="match status" value="1"/>
</dbReference>
<dbReference type="InterPro" id="IPR012451">
    <property type="entry name" value="DUF1656"/>
</dbReference>
<dbReference type="NCBIfam" id="NF008615">
    <property type="entry name" value="PRK11594.1"/>
    <property type="match status" value="1"/>
</dbReference>
<dbReference type="Pfam" id="PF07869">
    <property type="entry name" value="DUF1656"/>
    <property type="match status" value="1"/>
</dbReference>